<reference key="1">
    <citation type="journal article" date="2003" name="Proc. Natl. Acad. Sci. U.S.A.">
        <title>Complete genome sequence of Lactobacillus plantarum WCFS1.</title>
        <authorList>
            <person name="Kleerebezem M."/>
            <person name="Boekhorst J."/>
            <person name="van Kranenburg R."/>
            <person name="Molenaar D."/>
            <person name="Kuipers O.P."/>
            <person name="Leer R."/>
            <person name="Tarchini R."/>
            <person name="Peters S.A."/>
            <person name="Sandbrink H.M."/>
            <person name="Fiers M.W.E.J."/>
            <person name="Stiekema W."/>
            <person name="Klein Lankhorst R.M."/>
            <person name="Bron P.A."/>
            <person name="Hoffer S.M."/>
            <person name="Nierop Groot M.N."/>
            <person name="Kerkhoven R."/>
            <person name="De Vries M."/>
            <person name="Ursing B."/>
            <person name="De Vos W.M."/>
            <person name="Siezen R.J."/>
        </authorList>
    </citation>
    <scope>NUCLEOTIDE SEQUENCE [LARGE SCALE GENOMIC DNA]</scope>
    <source>
        <strain>ATCC BAA-793 / NCIMB 8826 / WCFS1</strain>
    </source>
</reference>
<reference key="2">
    <citation type="journal article" date="2012" name="J. Bacteriol.">
        <title>Complete resequencing and reannotation of the Lactobacillus plantarum WCFS1 genome.</title>
        <authorList>
            <person name="Siezen R.J."/>
            <person name="Francke C."/>
            <person name="Renckens B."/>
            <person name="Boekhorst J."/>
            <person name="Wels M."/>
            <person name="Kleerebezem M."/>
            <person name="van Hijum S.A."/>
        </authorList>
    </citation>
    <scope>NUCLEOTIDE SEQUENCE [LARGE SCALE GENOMIC DNA]</scope>
    <scope>GENOME REANNOTATION</scope>
    <source>
        <strain>ATCC BAA-793 / NCIMB 8826 / WCFS1</strain>
    </source>
</reference>
<name>Y2332_LACPL</name>
<accession>Q88UW9</accession>
<accession>F9UQN7</accession>
<proteinExistence type="inferred from homology"/>
<evidence type="ECO:0000255" key="1">
    <source>
        <dbReference type="HAMAP-Rule" id="MF_01851"/>
    </source>
</evidence>
<gene>
    <name type="ordered locus">lp_2332</name>
</gene>
<organism>
    <name type="scientific">Lactiplantibacillus plantarum (strain ATCC BAA-793 / NCIMB 8826 / WCFS1)</name>
    <name type="common">Lactobacillus plantarum</name>
    <dbReference type="NCBI Taxonomy" id="220668"/>
    <lineage>
        <taxon>Bacteria</taxon>
        <taxon>Bacillati</taxon>
        <taxon>Bacillota</taxon>
        <taxon>Bacilli</taxon>
        <taxon>Lactobacillales</taxon>
        <taxon>Lactobacillaceae</taxon>
        <taxon>Lactiplantibacillus</taxon>
    </lineage>
</organism>
<feature type="chain" id="PRO_0000348306" description="UPF0637 protein lp_2332">
    <location>
        <begin position="1"/>
        <end position="208"/>
    </location>
</feature>
<keyword id="KW-1185">Reference proteome</keyword>
<comment type="similarity">
    <text evidence="1">Belongs to the UPF0637 family.</text>
</comment>
<dbReference type="EMBL" id="AL935263">
    <property type="protein sequence ID" value="CCC79526.1"/>
    <property type="molecule type" value="Genomic_DNA"/>
</dbReference>
<dbReference type="RefSeq" id="WP_011101714.1">
    <property type="nucleotide sequence ID" value="NC_004567.2"/>
</dbReference>
<dbReference type="RefSeq" id="YP_004890040.1">
    <property type="nucleotide sequence ID" value="NC_004567.2"/>
</dbReference>
<dbReference type="SMR" id="Q88UW9"/>
<dbReference type="STRING" id="220668.lp_2332"/>
<dbReference type="EnsemblBacteria" id="CCC79526">
    <property type="protein sequence ID" value="CCC79526"/>
    <property type="gene ID" value="lp_2332"/>
</dbReference>
<dbReference type="KEGG" id="lpl:lp_2332"/>
<dbReference type="PATRIC" id="fig|220668.9.peg.1971"/>
<dbReference type="eggNOG" id="COG4493">
    <property type="taxonomic scope" value="Bacteria"/>
</dbReference>
<dbReference type="HOGENOM" id="CLU_096059_0_0_9"/>
<dbReference type="OrthoDB" id="9812818at2"/>
<dbReference type="PhylomeDB" id="Q88UW9"/>
<dbReference type="Proteomes" id="UP000000432">
    <property type="component" value="Chromosome"/>
</dbReference>
<dbReference type="Gene3D" id="3.30.930.20">
    <property type="entry name" value="Protein of unknown function DUF1054"/>
    <property type="match status" value="1"/>
</dbReference>
<dbReference type="HAMAP" id="MF_01851">
    <property type="entry name" value="UPF0637"/>
    <property type="match status" value="1"/>
</dbReference>
<dbReference type="InterPro" id="IPR009403">
    <property type="entry name" value="UPF0637"/>
</dbReference>
<dbReference type="InterPro" id="IPR053707">
    <property type="entry name" value="UPF0637_domain_sf"/>
</dbReference>
<dbReference type="Pfam" id="PF06335">
    <property type="entry name" value="DUF1054"/>
    <property type="match status" value="1"/>
</dbReference>
<dbReference type="PIRSF" id="PIRSF021332">
    <property type="entry name" value="DUF1054"/>
    <property type="match status" value="1"/>
</dbReference>
<dbReference type="SUPFAM" id="SSF142913">
    <property type="entry name" value="YktB/PF0168-like"/>
    <property type="match status" value="1"/>
</dbReference>
<protein>
    <recommendedName>
        <fullName evidence="1">UPF0637 protein lp_2332</fullName>
    </recommendedName>
</protein>
<sequence length="208" mass="23474">MFTNQDFEIFNDQTLAGRMHLIKTVIDPKFEQVAPTIITSLQTPGEPPFYAHVAKHLRRFKNPPVDTWVAFSQNKRSYKAWPHFELGLWPDRLFIYFDILDECKPAVQAKMQLADLTPLLKALPAGYVISNNHGVPATQLATPANITQAIKKFNQYKHSELVVGRAVLVGDPLFENADTLNKLIIATFKQLLSIYQPVMAAVSAERQA</sequence>